<protein>
    <recommendedName>
        <fullName>Rhodopsin</fullName>
    </recommendedName>
</protein>
<dbReference type="EMBL" id="U23802">
    <property type="protein sequence ID" value="AAC59737.1"/>
    <property type="molecule type" value="mRNA"/>
</dbReference>
<dbReference type="RefSeq" id="NP_001274211.1">
    <property type="nucleotide sequence ID" value="NM_001287282.1"/>
</dbReference>
<dbReference type="SMR" id="P52202"/>
<dbReference type="GlyCosmos" id="P52202">
    <property type="glycosylation" value="2 sites, No reported glycans"/>
</dbReference>
<dbReference type="GeneID" id="102559120"/>
<dbReference type="KEGG" id="amj:102559120"/>
<dbReference type="CTD" id="6010"/>
<dbReference type="eggNOG" id="KOG3656">
    <property type="taxonomic scope" value="Eukaryota"/>
</dbReference>
<dbReference type="OrthoDB" id="5962323at2759"/>
<dbReference type="PhylomeDB" id="P52202"/>
<dbReference type="GO" id="GO:0016020">
    <property type="term" value="C:membrane"/>
    <property type="evidence" value="ECO:0000250"/>
    <property type="project" value="UniProtKB"/>
</dbReference>
<dbReference type="GO" id="GO:0097381">
    <property type="term" value="C:photoreceptor disc membrane"/>
    <property type="evidence" value="ECO:0000250"/>
    <property type="project" value="UniProtKB"/>
</dbReference>
<dbReference type="GO" id="GO:0005886">
    <property type="term" value="C:plasma membrane"/>
    <property type="evidence" value="ECO:0000250"/>
    <property type="project" value="UniProtKB"/>
</dbReference>
<dbReference type="GO" id="GO:0005502">
    <property type="term" value="F:11-cis retinal binding"/>
    <property type="evidence" value="ECO:0000250"/>
    <property type="project" value="UniProtKB"/>
</dbReference>
<dbReference type="GO" id="GO:0008020">
    <property type="term" value="F:G protein-coupled photoreceptor activity"/>
    <property type="evidence" value="ECO:0000250"/>
    <property type="project" value="UniProtKB"/>
</dbReference>
<dbReference type="GO" id="GO:0016038">
    <property type="term" value="P:absorption of visible light"/>
    <property type="evidence" value="ECO:0000250"/>
    <property type="project" value="UniProtKB"/>
</dbReference>
<dbReference type="GO" id="GO:0016056">
    <property type="term" value="P:G protein-coupled opsin signaling pathway"/>
    <property type="evidence" value="ECO:0000250"/>
    <property type="project" value="UniProtKB"/>
</dbReference>
<dbReference type="GO" id="GO:0007601">
    <property type="term" value="P:visual perception"/>
    <property type="evidence" value="ECO:0007669"/>
    <property type="project" value="UniProtKB-KW"/>
</dbReference>
<dbReference type="CDD" id="cd15080">
    <property type="entry name" value="7tmA_MWS_opsin"/>
    <property type="match status" value="1"/>
</dbReference>
<dbReference type="FunFam" id="1.20.1070.10:FF:000018">
    <property type="entry name" value="Rhodopsin"/>
    <property type="match status" value="1"/>
</dbReference>
<dbReference type="Gene3D" id="1.20.1070.10">
    <property type="entry name" value="Rhodopsin 7-helix transmembrane proteins"/>
    <property type="match status" value="1"/>
</dbReference>
<dbReference type="InterPro" id="IPR050125">
    <property type="entry name" value="GPCR_opsins"/>
</dbReference>
<dbReference type="InterPro" id="IPR000276">
    <property type="entry name" value="GPCR_Rhodpsn"/>
</dbReference>
<dbReference type="InterPro" id="IPR017452">
    <property type="entry name" value="GPCR_Rhodpsn_7TM"/>
</dbReference>
<dbReference type="InterPro" id="IPR001760">
    <property type="entry name" value="Opsin"/>
</dbReference>
<dbReference type="InterPro" id="IPR027430">
    <property type="entry name" value="Retinal_BS"/>
</dbReference>
<dbReference type="InterPro" id="IPR000732">
    <property type="entry name" value="Rhodopsin"/>
</dbReference>
<dbReference type="InterPro" id="IPR019477">
    <property type="entry name" value="Rhodopsin_N"/>
</dbReference>
<dbReference type="PANTHER" id="PTHR24240">
    <property type="entry name" value="OPSIN"/>
    <property type="match status" value="1"/>
</dbReference>
<dbReference type="Pfam" id="PF00001">
    <property type="entry name" value="7tm_1"/>
    <property type="match status" value="1"/>
</dbReference>
<dbReference type="Pfam" id="PF10413">
    <property type="entry name" value="Rhodopsin_N"/>
    <property type="match status" value="1"/>
</dbReference>
<dbReference type="PRINTS" id="PR00237">
    <property type="entry name" value="GPCRRHODOPSN"/>
</dbReference>
<dbReference type="PRINTS" id="PR00238">
    <property type="entry name" value="OPSIN"/>
</dbReference>
<dbReference type="PRINTS" id="PR00579">
    <property type="entry name" value="RHODOPSIN"/>
</dbReference>
<dbReference type="SUPFAM" id="SSF81321">
    <property type="entry name" value="Family A G protein-coupled receptor-like"/>
    <property type="match status" value="1"/>
</dbReference>
<dbReference type="PROSITE" id="PS00237">
    <property type="entry name" value="G_PROTEIN_RECEP_F1_1"/>
    <property type="match status" value="1"/>
</dbReference>
<dbReference type="PROSITE" id="PS50262">
    <property type="entry name" value="G_PROTEIN_RECEP_F1_2"/>
    <property type="match status" value="1"/>
</dbReference>
<dbReference type="PROSITE" id="PS00238">
    <property type="entry name" value="OPSIN"/>
    <property type="match status" value="1"/>
</dbReference>
<organism>
    <name type="scientific">Alligator mississippiensis</name>
    <name type="common">American alligator</name>
    <dbReference type="NCBI Taxonomy" id="8496"/>
    <lineage>
        <taxon>Eukaryota</taxon>
        <taxon>Metazoa</taxon>
        <taxon>Chordata</taxon>
        <taxon>Craniata</taxon>
        <taxon>Vertebrata</taxon>
        <taxon>Euteleostomi</taxon>
        <taxon>Archelosauria</taxon>
        <taxon>Archosauria</taxon>
        <taxon>Crocodylia</taxon>
        <taxon>Alligatoridae</taxon>
        <taxon>Alligatorinae</taxon>
        <taxon>Alligator</taxon>
    </lineage>
</organism>
<feature type="chain" id="PRO_0000197644" description="Rhodopsin">
    <location>
        <begin position="1"/>
        <end position="352"/>
    </location>
</feature>
<feature type="topological domain" description="Extracellular" evidence="7">
    <location>
        <begin position="1"/>
        <end position="36"/>
    </location>
</feature>
<feature type="transmembrane region" description="Helical; Name=1" evidence="1">
    <location>
        <begin position="37"/>
        <end position="61"/>
    </location>
</feature>
<feature type="topological domain" description="Cytoplasmic" evidence="7">
    <location>
        <begin position="62"/>
        <end position="73"/>
    </location>
</feature>
<feature type="transmembrane region" description="Helical; Name=2" evidence="1">
    <location>
        <begin position="74"/>
        <end position="96"/>
    </location>
</feature>
<feature type="topological domain" description="Extracellular" evidence="7">
    <location>
        <begin position="97"/>
        <end position="110"/>
    </location>
</feature>
<feature type="transmembrane region" description="Helical; Name=3" evidence="1">
    <location>
        <begin position="111"/>
        <end position="133"/>
    </location>
</feature>
<feature type="topological domain" description="Cytoplasmic" evidence="7">
    <location>
        <begin position="134"/>
        <end position="152"/>
    </location>
</feature>
<feature type="transmembrane region" description="Helical; Name=4" evidence="1">
    <location>
        <begin position="153"/>
        <end position="173"/>
    </location>
</feature>
<feature type="topological domain" description="Extracellular" evidence="7">
    <location>
        <begin position="174"/>
        <end position="202"/>
    </location>
</feature>
<feature type="transmembrane region" description="Helical; Name=5" evidence="1">
    <location>
        <begin position="203"/>
        <end position="224"/>
    </location>
</feature>
<feature type="topological domain" description="Cytoplasmic" evidence="7">
    <location>
        <begin position="225"/>
        <end position="252"/>
    </location>
</feature>
<feature type="transmembrane region" description="Helical; Name=6" evidence="1">
    <location>
        <begin position="253"/>
        <end position="274"/>
    </location>
</feature>
<feature type="topological domain" description="Extracellular" evidence="7">
    <location>
        <begin position="275"/>
        <end position="286"/>
    </location>
</feature>
<feature type="transmembrane region" description="Helical; Name=7" evidence="1">
    <location>
        <begin position="287"/>
        <end position="308"/>
    </location>
</feature>
<feature type="topological domain" description="Cytoplasmic" evidence="7">
    <location>
        <begin position="309"/>
        <end position="352"/>
    </location>
</feature>
<feature type="region of interest" description="Disordered" evidence="5">
    <location>
        <begin position="332"/>
        <end position="352"/>
    </location>
</feature>
<feature type="short sequence motif" description="'Ionic lock' involved in activated form stabilization" evidence="1">
    <location>
        <begin position="134"/>
        <end position="136"/>
    </location>
</feature>
<feature type="compositionally biased region" description="Low complexity" evidence="5">
    <location>
        <begin position="335"/>
        <end position="352"/>
    </location>
</feature>
<feature type="site" description="Plays an important role in the conformation switch to the active conformation" evidence="1">
    <location>
        <position position="113"/>
    </location>
</feature>
<feature type="modified residue" description="N6-(retinylidene)lysine" evidence="1">
    <location>
        <position position="296"/>
    </location>
</feature>
<feature type="lipid moiety-binding region" description="S-palmitoyl cysteine" evidence="1">
    <location>
        <position position="322"/>
    </location>
</feature>
<feature type="lipid moiety-binding region" description="S-palmitoyl cysteine" evidence="1">
    <location>
        <position position="323"/>
    </location>
</feature>
<feature type="glycosylation site" description="N-linked (GlcNAc...) asparagine" evidence="3">
    <location>
        <position position="2"/>
    </location>
</feature>
<feature type="glycosylation site" description="N-linked (GlcNAc...) asparagine" evidence="3">
    <location>
        <position position="15"/>
    </location>
</feature>
<feature type="disulfide bond" evidence="4">
    <location>
        <begin position="110"/>
        <end position="187"/>
    </location>
</feature>
<keyword id="KW-0966">Cell projection</keyword>
<keyword id="KW-0157">Chromophore</keyword>
<keyword id="KW-0903">Direct protein sequencing</keyword>
<keyword id="KW-1015">Disulfide bond</keyword>
<keyword id="KW-0297">G-protein coupled receptor</keyword>
<keyword id="KW-0325">Glycoprotein</keyword>
<keyword id="KW-0449">Lipoprotein</keyword>
<keyword id="KW-0472">Membrane</keyword>
<keyword id="KW-0564">Palmitate</keyword>
<keyword id="KW-0597">Phosphoprotein</keyword>
<keyword id="KW-0600">Photoreceptor protein</keyword>
<keyword id="KW-0675">Receptor</keyword>
<keyword id="KW-0681">Retinal protein</keyword>
<keyword id="KW-0716">Sensory transduction</keyword>
<keyword id="KW-0807">Transducer</keyword>
<keyword id="KW-0812">Transmembrane</keyword>
<keyword id="KW-1133">Transmembrane helix</keyword>
<keyword id="KW-0844">Vision</keyword>
<comment type="function">
    <text evidence="1 2 6">Photoreceptor required for image-forming vision at low light intensity (PubMed:8654500). Required for photoreceptor cell viability after birth (By similarity). Light-induced isomerization of 11-cis to all-trans retinal triggers a conformational change that activates signaling via G-proteins (PubMed:8654500). Subsequent receptor phosphorylation mediates displacement of the bound G-protein alpha subunit by arrestin and terminates signaling (By similarity).</text>
</comment>
<comment type="subcellular location">
    <subcellularLocation>
        <location evidence="6">Membrane</location>
        <topology evidence="2">Multi-pass membrane protein</topology>
    </subcellularLocation>
    <subcellularLocation>
        <location evidence="6">Cell projection</location>
        <location evidence="6">Cilium</location>
        <location evidence="6">Photoreceptor outer segment</location>
    </subcellularLocation>
    <text evidence="2">Synthesized in the inner segment (IS) of rod photoreceptor cells before vectorial transport to disk membranes in the rod outer segment (OS) photosensory cilia.</text>
</comment>
<comment type="tissue specificity">
    <text evidence="6">Expressed in rod-shaped photoreceptor cells in the retina that mediate vision in dim ligh (at protein level).</text>
</comment>
<comment type="PTM">
    <text evidence="6">Contains one covalently linked retinal chromophore. Upon light absorption, the covalently bound 11-cis-retinal is converted to all-trans-retinal. After hydrolysis of the Schiff base and release of the covalently bound all-trans-retinal, active rhodopsin is regenerated by binding of a fresh molecule of 11-cis-retinal.</text>
</comment>
<comment type="similarity">
    <text evidence="4">Belongs to the G-protein coupled receptor 1 family. Opsin subfamily.</text>
</comment>
<evidence type="ECO:0000250" key="1">
    <source>
        <dbReference type="UniProtKB" id="P02699"/>
    </source>
</evidence>
<evidence type="ECO:0000250" key="2">
    <source>
        <dbReference type="UniProtKB" id="P08100"/>
    </source>
</evidence>
<evidence type="ECO:0000255" key="3"/>
<evidence type="ECO:0000255" key="4">
    <source>
        <dbReference type="PROSITE-ProRule" id="PRU00521"/>
    </source>
</evidence>
<evidence type="ECO:0000256" key="5">
    <source>
        <dbReference type="SAM" id="MobiDB-lite"/>
    </source>
</evidence>
<evidence type="ECO:0000269" key="6">
    <source>
    </source>
</evidence>
<evidence type="ECO:0000305" key="7"/>
<proteinExistence type="evidence at protein level"/>
<sequence>MNGTEGPDFYIPFSNKTGVVRSPFEYPQYYLAEPWKYSALAAYMFMLIILGFPINFLTLYVTVQHKKLRSPLNYILLNLAVADLFMVLGGFTTTLYTSMNGYFVFGVTGCYFEGFFATLGGEVALWCLVVLAIERYIVVCKPMSNFRFGENHAIMGVVFTWIMALTCAAPPLVGWSRYIPEGMQCSCGVDYYTLKPEVNNESFVIYMFVVHFAIPLAVIFFCYGRLVCTVKEAAAQQQESATTQKAEKEVTRMVIIMVVSFLICWVPYASVAFYIFSNQGSDFGPVFMTIPAFFAKSSAIYNPVIYIVMNKQFRNCMITTLCCGKNPLGDDETATGSKTETSSVSTSQVSPA</sequence>
<reference key="1">
    <citation type="journal article" date="1995" name="Exp. Eye Res.">
        <title>Alligator rhodopsin: sequence and biochemical properties.</title>
        <authorList>
            <person name="Smith W."/>
            <person name="Adamus G."/>
            <person name="der Wel H."/>
            <person name="Timmers A."/>
            <person name="Palczewski K."/>
            <person name="Ulshafer R."/>
            <person name="Hargrave P.A."/>
            <person name="McDowell J."/>
        </authorList>
    </citation>
    <scope>NUCLEOTIDE SEQUENCE [MRNA]</scope>
    <scope>PARTIAL PROTEIN SEQUENCE</scope>
    <scope>SUBCELLULAR LOCATION</scope>
    <scope>FUNCTION</scope>
    <scope>TISSUE SPECIFICITY</scope>
    <scope>RETINAL BINDING</scope>
    <source>
        <tissue>Retina</tissue>
    </source>
</reference>
<name>OPSD_ALLMI</name>
<gene>
    <name type="primary">RHO</name>
</gene>
<accession>P52202</accession>